<organism>
    <name type="scientific">Bacillus velezensis (strain DSM 23117 / BGSC 10A6 / LMG 26770 / FZB42)</name>
    <name type="common">Bacillus amyloliquefaciens subsp. plantarum</name>
    <dbReference type="NCBI Taxonomy" id="326423"/>
    <lineage>
        <taxon>Bacteria</taxon>
        <taxon>Bacillati</taxon>
        <taxon>Bacillota</taxon>
        <taxon>Bacilli</taxon>
        <taxon>Bacillales</taxon>
        <taxon>Bacillaceae</taxon>
        <taxon>Bacillus</taxon>
        <taxon>Bacillus amyloliquefaciens group</taxon>
    </lineage>
</organism>
<keyword id="KW-0030">Aminoacyl-tRNA synthetase</keyword>
<keyword id="KW-0067">ATP-binding</keyword>
<keyword id="KW-0963">Cytoplasm</keyword>
<keyword id="KW-0436">Ligase</keyword>
<keyword id="KW-0547">Nucleotide-binding</keyword>
<keyword id="KW-0648">Protein biosynthesis</keyword>
<sequence length="430" mass="49108">MKTTINQVYKHTGEEVMIGAWVANKRSSGKIAFLQLRDGTGFIQGVVVKAEVEEDIFQIAKSVTQETSLYVKGIVKEDERSPLGYELAVTSIEVIHEATDYPITPKEHGTEFLMDHRHLWLRSKRQHAIMKIRNEIIRATYEFFNKEGFVKVDPPILTGSAPEGTTELFATKYFDEDAFLSQSGQLYMEAAAMALGKVFSFGPTFRAEKSKTKRHLIEFWMIEPEMAFVEFEENLEVQENYVAYIVQSVLEHCKIELNTLGRDTSKLEQIKAPFPRITYDKAIEFLKEKGFDDIEWGDDFGAPHETAIAESYDKPVFITHYPTSLKPFYMQPAKDRDDVVLCADLIAPEGYGEIIGGSERVHDMDLLEERLKEHGLDSDAYKWYAELRQYGSVPHSGFGLGLERTVAWISGAPHVRETIPFPRLLNRLYP</sequence>
<dbReference type="EC" id="6.1.1.22" evidence="1"/>
<dbReference type="EMBL" id="CP000560">
    <property type="protein sequence ID" value="ABS74413.1"/>
    <property type="molecule type" value="Genomic_DNA"/>
</dbReference>
<dbReference type="RefSeq" id="WP_012117840.1">
    <property type="nucleotide sequence ID" value="NC_009725.2"/>
</dbReference>
<dbReference type="SMR" id="A7Z5Y7"/>
<dbReference type="GeneID" id="93081186"/>
<dbReference type="KEGG" id="bay:RBAM_020510"/>
<dbReference type="HOGENOM" id="CLU_004553_2_0_9"/>
<dbReference type="Proteomes" id="UP000001120">
    <property type="component" value="Chromosome"/>
</dbReference>
<dbReference type="GO" id="GO:0005737">
    <property type="term" value="C:cytoplasm"/>
    <property type="evidence" value="ECO:0007669"/>
    <property type="project" value="UniProtKB-SubCell"/>
</dbReference>
<dbReference type="GO" id="GO:0004816">
    <property type="term" value="F:asparagine-tRNA ligase activity"/>
    <property type="evidence" value="ECO:0007669"/>
    <property type="project" value="UniProtKB-UniRule"/>
</dbReference>
<dbReference type="GO" id="GO:0005524">
    <property type="term" value="F:ATP binding"/>
    <property type="evidence" value="ECO:0007669"/>
    <property type="project" value="UniProtKB-UniRule"/>
</dbReference>
<dbReference type="GO" id="GO:0140096">
    <property type="term" value="F:catalytic activity, acting on a protein"/>
    <property type="evidence" value="ECO:0007669"/>
    <property type="project" value="UniProtKB-ARBA"/>
</dbReference>
<dbReference type="GO" id="GO:0003676">
    <property type="term" value="F:nucleic acid binding"/>
    <property type="evidence" value="ECO:0007669"/>
    <property type="project" value="InterPro"/>
</dbReference>
<dbReference type="GO" id="GO:0016740">
    <property type="term" value="F:transferase activity"/>
    <property type="evidence" value="ECO:0007669"/>
    <property type="project" value="UniProtKB-ARBA"/>
</dbReference>
<dbReference type="GO" id="GO:0006421">
    <property type="term" value="P:asparaginyl-tRNA aminoacylation"/>
    <property type="evidence" value="ECO:0007669"/>
    <property type="project" value="UniProtKB-UniRule"/>
</dbReference>
<dbReference type="CDD" id="cd04323">
    <property type="entry name" value="AsnRS_cyto_like_N"/>
    <property type="match status" value="1"/>
</dbReference>
<dbReference type="CDD" id="cd00776">
    <property type="entry name" value="AsxRS_core"/>
    <property type="match status" value="1"/>
</dbReference>
<dbReference type="Gene3D" id="3.30.930.10">
    <property type="entry name" value="Bira Bifunctional Protein, Domain 2"/>
    <property type="match status" value="1"/>
</dbReference>
<dbReference type="Gene3D" id="2.40.50.140">
    <property type="entry name" value="Nucleic acid-binding proteins"/>
    <property type="match status" value="1"/>
</dbReference>
<dbReference type="HAMAP" id="MF_00534">
    <property type="entry name" value="Asn_tRNA_synth"/>
    <property type="match status" value="1"/>
</dbReference>
<dbReference type="InterPro" id="IPR004364">
    <property type="entry name" value="Aa-tRNA-synt_II"/>
</dbReference>
<dbReference type="InterPro" id="IPR006195">
    <property type="entry name" value="aa-tRNA-synth_II"/>
</dbReference>
<dbReference type="InterPro" id="IPR045864">
    <property type="entry name" value="aa-tRNA-synth_II/BPL/LPL"/>
</dbReference>
<dbReference type="InterPro" id="IPR004522">
    <property type="entry name" value="Asn-tRNA-ligase"/>
</dbReference>
<dbReference type="InterPro" id="IPR002312">
    <property type="entry name" value="Asp/Asn-tRNA-synth_IIb"/>
</dbReference>
<dbReference type="InterPro" id="IPR012340">
    <property type="entry name" value="NA-bd_OB-fold"/>
</dbReference>
<dbReference type="InterPro" id="IPR004365">
    <property type="entry name" value="NA-bd_OB_tRNA"/>
</dbReference>
<dbReference type="NCBIfam" id="TIGR00457">
    <property type="entry name" value="asnS"/>
    <property type="match status" value="1"/>
</dbReference>
<dbReference type="NCBIfam" id="NF003037">
    <property type="entry name" value="PRK03932.1"/>
    <property type="match status" value="1"/>
</dbReference>
<dbReference type="NCBIfam" id="NF003483">
    <property type="entry name" value="PRK05159.1"/>
    <property type="match status" value="1"/>
</dbReference>
<dbReference type="PANTHER" id="PTHR22594:SF34">
    <property type="entry name" value="ASPARAGINE--TRNA LIGASE, MITOCHONDRIAL-RELATED"/>
    <property type="match status" value="1"/>
</dbReference>
<dbReference type="PANTHER" id="PTHR22594">
    <property type="entry name" value="ASPARTYL/LYSYL-TRNA SYNTHETASE"/>
    <property type="match status" value="1"/>
</dbReference>
<dbReference type="Pfam" id="PF00152">
    <property type="entry name" value="tRNA-synt_2"/>
    <property type="match status" value="1"/>
</dbReference>
<dbReference type="Pfam" id="PF01336">
    <property type="entry name" value="tRNA_anti-codon"/>
    <property type="match status" value="1"/>
</dbReference>
<dbReference type="PRINTS" id="PR01042">
    <property type="entry name" value="TRNASYNTHASP"/>
</dbReference>
<dbReference type="SUPFAM" id="SSF55681">
    <property type="entry name" value="Class II aaRS and biotin synthetases"/>
    <property type="match status" value="1"/>
</dbReference>
<dbReference type="SUPFAM" id="SSF50249">
    <property type="entry name" value="Nucleic acid-binding proteins"/>
    <property type="match status" value="1"/>
</dbReference>
<dbReference type="PROSITE" id="PS50862">
    <property type="entry name" value="AA_TRNA_LIGASE_II"/>
    <property type="match status" value="1"/>
</dbReference>
<name>SYN_BACVZ</name>
<proteinExistence type="inferred from homology"/>
<evidence type="ECO:0000255" key="1">
    <source>
        <dbReference type="HAMAP-Rule" id="MF_00534"/>
    </source>
</evidence>
<protein>
    <recommendedName>
        <fullName evidence="1">Asparagine--tRNA ligase</fullName>
        <ecNumber evidence="1">6.1.1.22</ecNumber>
    </recommendedName>
    <alternativeName>
        <fullName evidence="1">Asparaginyl-tRNA synthetase</fullName>
        <shortName evidence="1">AsnRS</shortName>
    </alternativeName>
</protein>
<gene>
    <name evidence="1" type="primary">asnS</name>
    <name type="ordered locus">RBAM_020510</name>
</gene>
<comment type="catalytic activity">
    <reaction evidence="1">
        <text>tRNA(Asn) + L-asparagine + ATP = L-asparaginyl-tRNA(Asn) + AMP + diphosphate + H(+)</text>
        <dbReference type="Rhea" id="RHEA:11180"/>
        <dbReference type="Rhea" id="RHEA-COMP:9659"/>
        <dbReference type="Rhea" id="RHEA-COMP:9674"/>
        <dbReference type="ChEBI" id="CHEBI:15378"/>
        <dbReference type="ChEBI" id="CHEBI:30616"/>
        <dbReference type="ChEBI" id="CHEBI:33019"/>
        <dbReference type="ChEBI" id="CHEBI:58048"/>
        <dbReference type="ChEBI" id="CHEBI:78442"/>
        <dbReference type="ChEBI" id="CHEBI:78515"/>
        <dbReference type="ChEBI" id="CHEBI:456215"/>
        <dbReference type="EC" id="6.1.1.22"/>
    </reaction>
</comment>
<comment type="subunit">
    <text evidence="1">Homodimer.</text>
</comment>
<comment type="subcellular location">
    <subcellularLocation>
        <location evidence="1">Cytoplasm</location>
    </subcellularLocation>
</comment>
<comment type="similarity">
    <text evidence="1">Belongs to the class-II aminoacyl-tRNA synthetase family.</text>
</comment>
<reference key="1">
    <citation type="journal article" date="2007" name="Nat. Biotechnol.">
        <title>Comparative analysis of the complete genome sequence of the plant growth-promoting bacterium Bacillus amyloliquefaciens FZB42.</title>
        <authorList>
            <person name="Chen X.H."/>
            <person name="Koumoutsi A."/>
            <person name="Scholz R."/>
            <person name="Eisenreich A."/>
            <person name="Schneider K."/>
            <person name="Heinemeyer I."/>
            <person name="Morgenstern B."/>
            <person name="Voss B."/>
            <person name="Hess W.R."/>
            <person name="Reva O."/>
            <person name="Junge H."/>
            <person name="Voigt B."/>
            <person name="Jungblut P.R."/>
            <person name="Vater J."/>
            <person name="Suessmuth R."/>
            <person name="Liesegang H."/>
            <person name="Strittmatter A."/>
            <person name="Gottschalk G."/>
            <person name="Borriss R."/>
        </authorList>
    </citation>
    <scope>NUCLEOTIDE SEQUENCE [LARGE SCALE GENOMIC DNA]</scope>
    <source>
        <strain>DSM 23117 / BGSC 10A6 / LMG 26770 / FZB42</strain>
    </source>
</reference>
<feature type="chain" id="PRO_1000051376" description="Asparagine--tRNA ligase">
    <location>
        <begin position="1"/>
        <end position="430"/>
    </location>
</feature>
<accession>A7Z5Y7</accession>